<protein>
    <recommendedName>
        <fullName>Maintenance of telomere capping protein 6</fullName>
    </recommendedName>
</protein>
<gene>
    <name type="primary">MTC6</name>
    <name type="ORF">PGUG_02377</name>
</gene>
<comment type="function">
    <text evidence="1">May be involved in telomere capping.</text>
</comment>
<comment type="subcellular location">
    <subcellularLocation>
        <location evidence="3">Membrane</location>
        <topology evidence="3">Single-pass type I membrane protein</topology>
    </subcellularLocation>
</comment>
<comment type="similarity">
    <text evidence="3">Belongs to the MTC6 family.</text>
</comment>
<dbReference type="EMBL" id="CH408157">
    <property type="protein sequence ID" value="EDK38279.2"/>
    <property type="molecule type" value="Genomic_DNA"/>
</dbReference>
<dbReference type="RefSeq" id="XP_001484648.1">
    <property type="nucleotide sequence ID" value="XM_001484598.1"/>
</dbReference>
<dbReference type="FunCoup" id="A5DGH6">
    <property type="interactions" value="14"/>
</dbReference>
<dbReference type="STRING" id="294746.A5DGH6"/>
<dbReference type="GlyCosmos" id="A5DGH6">
    <property type="glycosylation" value="10 sites, No reported glycans"/>
</dbReference>
<dbReference type="GeneID" id="5126771"/>
<dbReference type="KEGG" id="pgu:PGUG_02377"/>
<dbReference type="VEuPathDB" id="FungiDB:PGUG_02377"/>
<dbReference type="eggNOG" id="ENOG502QVFP">
    <property type="taxonomic scope" value="Eukaryota"/>
</dbReference>
<dbReference type="HOGENOM" id="CLU_033723_0_0_1"/>
<dbReference type="InParanoid" id="A5DGH6"/>
<dbReference type="OMA" id="WGTIDPQ"/>
<dbReference type="OrthoDB" id="5573651at2759"/>
<dbReference type="Proteomes" id="UP000001997">
    <property type="component" value="Unassembled WGS sequence"/>
</dbReference>
<dbReference type="GO" id="GO:0016020">
    <property type="term" value="C:membrane"/>
    <property type="evidence" value="ECO:0007669"/>
    <property type="project" value="UniProtKB-SubCell"/>
</dbReference>
<dbReference type="InterPro" id="IPR051008">
    <property type="entry name" value="Telomere_Capping_Maintenance"/>
</dbReference>
<dbReference type="PANTHER" id="PTHR35518:SF2">
    <property type="entry name" value="MAINTENANCE OF TELOMERE CAPPING PROTEIN 6"/>
    <property type="match status" value="1"/>
</dbReference>
<dbReference type="PANTHER" id="PTHR35518">
    <property type="entry name" value="MAINTENANCE OF TELOMOERE CAPPING"/>
    <property type="match status" value="1"/>
</dbReference>
<dbReference type="Pfam" id="PF25506">
    <property type="entry name" value="TIM-barrel_MTC6"/>
    <property type="match status" value="1"/>
</dbReference>
<organism>
    <name type="scientific">Meyerozyma guilliermondii (strain ATCC 6260 / CBS 566 / DSM 6381 / JCM 1539 / NBRC 10279 / NRRL Y-324)</name>
    <name type="common">Yeast</name>
    <name type="synonym">Candida guilliermondii</name>
    <dbReference type="NCBI Taxonomy" id="294746"/>
    <lineage>
        <taxon>Eukaryota</taxon>
        <taxon>Fungi</taxon>
        <taxon>Dikarya</taxon>
        <taxon>Ascomycota</taxon>
        <taxon>Saccharomycotina</taxon>
        <taxon>Pichiomycetes</taxon>
        <taxon>Debaryomycetaceae</taxon>
        <taxon>Meyerozyma</taxon>
    </lineage>
</organism>
<evidence type="ECO:0000250" key="1"/>
<evidence type="ECO:0000255" key="2"/>
<evidence type="ECO:0000305" key="3"/>
<feature type="signal peptide" evidence="2">
    <location>
        <begin position="1"/>
        <end position="20"/>
    </location>
</feature>
<feature type="chain" id="PRO_0000407781" description="Maintenance of telomere capping protein 6">
    <location>
        <begin position="21"/>
        <end position="568"/>
    </location>
</feature>
<feature type="topological domain" description="Extracellular" evidence="2">
    <location>
        <begin position="21"/>
        <end position="512"/>
    </location>
</feature>
<feature type="transmembrane region" description="Helical" evidence="2">
    <location>
        <begin position="513"/>
        <end position="533"/>
    </location>
</feature>
<feature type="topological domain" description="Cytoplasmic" evidence="2">
    <location>
        <begin position="534"/>
        <end position="568"/>
    </location>
</feature>
<feature type="glycosylation site" description="N-linked (GlcNAc...) asparagine" evidence="2">
    <location>
        <position position="23"/>
    </location>
</feature>
<feature type="glycosylation site" description="N-linked (GlcNAc...) asparagine" evidence="2">
    <location>
        <position position="68"/>
    </location>
</feature>
<feature type="glycosylation site" description="N-linked (GlcNAc...) asparagine" evidence="2">
    <location>
        <position position="94"/>
    </location>
</feature>
<feature type="glycosylation site" description="N-linked (GlcNAc...) asparagine" evidence="2">
    <location>
        <position position="109"/>
    </location>
</feature>
<feature type="glycosylation site" description="N-linked (GlcNAc...) asparagine" evidence="2">
    <location>
        <position position="174"/>
    </location>
</feature>
<feature type="glycosylation site" description="N-linked (GlcNAc...) asparagine" evidence="2">
    <location>
        <position position="193"/>
    </location>
</feature>
<feature type="glycosylation site" description="N-linked (GlcNAc...) asparagine" evidence="2">
    <location>
        <position position="197"/>
    </location>
</feature>
<feature type="glycosylation site" description="N-linked (GlcNAc...) asparagine" evidence="2">
    <location>
        <position position="230"/>
    </location>
</feature>
<feature type="glycosylation site" description="N-linked (GlcNAc...) asparagine" evidence="2">
    <location>
        <position position="339"/>
    </location>
</feature>
<feature type="glycosylation site" description="N-linked (GlcNAc...) asparagine" evidence="2">
    <location>
        <position position="382"/>
    </location>
</feature>
<accession>A5DGH6</accession>
<sequence length="568" mass="64643">MLLFLVCFVCNIWSVFGVQAASNVSDVVNTIVVASRTQRDISMLVPIGQTNNMGVSLNTVLFEKVGYNSSSLDYIRQLLDGGLQTWMLDLYYNNATSNWQLCPAPFPQNSSTNAYETRTVRWNNRDYHCQPSFTLDSVMQEFRSYFMSTNTNIAVNLIQIMFNLYDFDFSESKNKTIASKELKNYATFSNYGNSTLNSSLSSVSDMLYTPQDLTTYQKTQSGTGISAFYNTSAFDFPSSQTFLLNDYKRLITYVAENKVPKSALGSNDENTIFFNEDFADISYTSDESLLERCGSRTLSDFNQLSLNSNFRTVVDNENVPFTPSSFRKYVTCGYSPILNASRYSIPNKPATTDISDILTYYFPRSYWSWAPGQPHDRQHTANTSSFDKRDYKSSDNQMARKCVTLQESGFVLSNCYEEHKFACQKFNSPNEWKISVSSDTYFSDDYGDCPEGYSFNVPQSSIEVDSLRQEVANSGEKYPIWVDLNDITVANCFVTGGPYAQCPYQRTVSGRRLVELIAPSFVVASVIVVLIFIEKIFRVNPVQTNRKRYWRRAINEYNKQHGYEGVPS</sequence>
<reference key="1">
    <citation type="journal article" date="2009" name="Nature">
        <title>Evolution of pathogenicity and sexual reproduction in eight Candida genomes.</title>
        <authorList>
            <person name="Butler G."/>
            <person name="Rasmussen M.D."/>
            <person name="Lin M.F."/>
            <person name="Santos M.A.S."/>
            <person name="Sakthikumar S."/>
            <person name="Munro C.A."/>
            <person name="Rheinbay E."/>
            <person name="Grabherr M."/>
            <person name="Forche A."/>
            <person name="Reedy J.L."/>
            <person name="Agrafioti I."/>
            <person name="Arnaud M.B."/>
            <person name="Bates S."/>
            <person name="Brown A.J.P."/>
            <person name="Brunke S."/>
            <person name="Costanzo M.C."/>
            <person name="Fitzpatrick D.A."/>
            <person name="de Groot P.W.J."/>
            <person name="Harris D."/>
            <person name="Hoyer L.L."/>
            <person name="Hube B."/>
            <person name="Klis F.M."/>
            <person name="Kodira C."/>
            <person name="Lennard N."/>
            <person name="Logue M.E."/>
            <person name="Martin R."/>
            <person name="Neiman A.M."/>
            <person name="Nikolaou E."/>
            <person name="Quail M.A."/>
            <person name="Quinn J."/>
            <person name="Santos M.C."/>
            <person name="Schmitzberger F.F."/>
            <person name="Sherlock G."/>
            <person name="Shah P."/>
            <person name="Silverstein K.A.T."/>
            <person name="Skrzypek M.S."/>
            <person name="Soll D."/>
            <person name="Staggs R."/>
            <person name="Stansfield I."/>
            <person name="Stumpf M.P.H."/>
            <person name="Sudbery P.E."/>
            <person name="Srikantha T."/>
            <person name="Zeng Q."/>
            <person name="Berman J."/>
            <person name="Berriman M."/>
            <person name="Heitman J."/>
            <person name="Gow N.A.R."/>
            <person name="Lorenz M.C."/>
            <person name="Birren B.W."/>
            <person name="Kellis M."/>
            <person name="Cuomo C.A."/>
        </authorList>
    </citation>
    <scope>NUCLEOTIDE SEQUENCE [LARGE SCALE GENOMIC DNA]</scope>
    <source>
        <strain>ATCC 6260 / CBS 566 / DSM 6381 / JCM 1539 / NBRC 10279 / NRRL Y-324</strain>
    </source>
</reference>
<proteinExistence type="inferred from homology"/>
<name>MTC6_PICGU</name>
<keyword id="KW-0325">Glycoprotein</keyword>
<keyword id="KW-0472">Membrane</keyword>
<keyword id="KW-1185">Reference proteome</keyword>
<keyword id="KW-0732">Signal</keyword>
<keyword id="KW-0812">Transmembrane</keyword>
<keyword id="KW-1133">Transmembrane helix</keyword>